<accession>Q95ND0</accession>
<comment type="function">
    <text evidence="1">Receptor for a number of inflammatory CC-chemokines including CCL3/MIP-1-alpha, CCL4/MIP-1-beta and RANTES and subsequently transduces a signal by increasing the intracellular calcium ion level. May play a role in the control of granulocytic lineage proliferation or differentiation. Participates in T-lymphocyte migration to the infection site by acting as a chemotactic receptor.</text>
</comment>
<comment type="subunit">
    <text evidence="1">Interacts with PRAF2. Efficient ligand binding to CCL3/MIP-1alpha and CCL4/MIP-1beta requires sulfation, O-glycosylation and sialic acid modifications. Glycosylation on Ser-6 is required for efficient binding of CCL4. Interacts with GRK2. Interacts with ARRB1 and ARRB2. Interacts with CNIH4. Interacts with S100A4; this interaction stimulates T-lymphocyte chemotaxis.</text>
</comment>
<comment type="subcellular location">
    <subcellularLocation>
        <location evidence="2">Cell membrane</location>
        <topology evidence="2">Multi-pass membrane protein</topology>
    </subcellularLocation>
</comment>
<comment type="PTM">
    <text evidence="1">Sulfated on at least 2 of the N-terminal tyrosines. Sulfation is required for efficient binding of the chemokines, CCL3 and CCL4 (By similarity).</text>
</comment>
<comment type="PTM">
    <text evidence="1">Palmitoylation in the C-terminal is important for cell surface expression.</text>
</comment>
<comment type="PTM">
    <text evidence="1">Phosphorylation on serine residues in the C-terminal is stimulated by binding CC chemokines especially by APO-RANTES.</text>
</comment>
<comment type="PTM">
    <text evidence="1">O-glycosylated, but not N-glycosylated. Ser-6 appears to be the major site even if Ser-7 may be also O-glycosylated. Also sialylated glycans present which contribute to chemokine binding. Thr-16 and Ser-17 may also be glycosylated and, if so, with small moieties such as a T-antigen.</text>
</comment>
<comment type="similarity">
    <text evidence="4">Belongs to the G-protein coupled receptor 1 family.</text>
</comment>
<reference key="1">
    <citation type="journal article" date="1999" name="Mol. Biol. Evol.">
        <title>Sequence evolution of the CCR5 chemokine receptor gene in primates.</title>
        <authorList>
            <person name="Zhang Y.-W."/>
            <person name="Ryder O.A."/>
            <person name="Zhang Y.-P."/>
        </authorList>
    </citation>
    <scope>NUCLEOTIDE SEQUENCE [GENOMIC DNA]</scope>
</reference>
<gene>
    <name type="primary">CCR5</name>
    <name type="synonym">CMKBR5</name>
</gene>
<keyword id="KW-1003">Cell membrane</keyword>
<keyword id="KW-1015">Disulfide bond</keyword>
<keyword id="KW-0297">G-protein coupled receptor</keyword>
<keyword id="KW-0325">Glycoprotein</keyword>
<keyword id="KW-0449">Lipoprotein</keyword>
<keyword id="KW-0472">Membrane</keyword>
<keyword id="KW-0564">Palmitate</keyword>
<keyword id="KW-0597">Phosphoprotein</keyword>
<keyword id="KW-0675">Receptor</keyword>
<keyword id="KW-0765">Sulfation</keyword>
<keyword id="KW-0807">Transducer</keyword>
<keyword id="KW-0812">Transmembrane</keyword>
<keyword id="KW-1133">Transmembrane helix</keyword>
<proteinExistence type="inferred from homology"/>
<organism>
    <name type="scientific">Erythrocebus patas</name>
    <name type="common">Red guenon</name>
    <name type="synonym">Cercopithecus patas</name>
    <dbReference type="NCBI Taxonomy" id="9538"/>
    <lineage>
        <taxon>Eukaryota</taxon>
        <taxon>Metazoa</taxon>
        <taxon>Chordata</taxon>
        <taxon>Craniata</taxon>
        <taxon>Vertebrata</taxon>
        <taxon>Euteleostomi</taxon>
        <taxon>Mammalia</taxon>
        <taxon>Eutheria</taxon>
        <taxon>Euarchontoglires</taxon>
        <taxon>Primates</taxon>
        <taxon>Haplorrhini</taxon>
        <taxon>Catarrhini</taxon>
        <taxon>Cercopithecidae</taxon>
        <taxon>Cercopithecinae</taxon>
        <taxon>Erythrocebus</taxon>
    </lineage>
</organism>
<sequence length="352" mass="40552">MDYQVSSPTYDIDYYTSEPCQKINVKQIAARLLPPLYSLVFIFGFVGNILVVLILINCKRLKSMTDIYLLNLAISDLLFLLTVPFWAHYAAAQWNFGNTMCQLLTGLYFIGFFSGIFFIILLTIDRYLAIVHAVFALKARTVTFGVVTSVITWVVAVFASLPGIIFTRYQREGLHYTCSSHFPYSQYQFWKNFQTLKIVILGLVLPLLVMVICYSGILKTLLRCRNEKKRHRAVRLIFTIMIVYFLFWAPYNIVLLLNTFQEFFGLNNCSSSNRLDQAMQVTETLGMTHCCINPIIYAFVGEKFRNYLLVFFQKHIAKRFCKCCSIFQQEAPERASSVYTRSTGEQETSVGL</sequence>
<protein>
    <recommendedName>
        <fullName>C-C chemokine receptor type 5</fullName>
        <shortName>C-C CKR-5</shortName>
        <shortName>CC-CKR-5</shortName>
        <shortName>CCR-5</shortName>
        <shortName>CCR5</shortName>
    </recommendedName>
    <cdAntigenName>CD195</cdAntigenName>
</protein>
<dbReference type="EMBL" id="AF177879">
    <property type="protein sequence ID" value="AAK43362.1"/>
    <property type="molecule type" value="Genomic_DNA"/>
</dbReference>
<dbReference type="SMR" id="Q95ND0"/>
<dbReference type="GlyCosmos" id="Q95ND0">
    <property type="glycosylation" value="2 sites, No reported glycans"/>
</dbReference>
<dbReference type="GO" id="GO:0005737">
    <property type="term" value="C:cytoplasm"/>
    <property type="evidence" value="ECO:0007669"/>
    <property type="project" value="TreeGrafter"/>
</dbReference>
<dbReference type="GO" id="GO:0009897">
    <property type="term" value="C:external side of plasma membrane"/>
    <property type="evidence" value="ECO:0000250"/>
    <property type="project" value="UniProtKB"/>
</dbReference>
<dbReference type="GO" id="GO:0016493">
    <property type="term" value="F:C-C chemokine receptor activity"/>
    <property type="evidence" value="ECO:0000250"/>
    <property type="project" value="UniProtKB"/>
</dbReference>
<dbReference type="GO" id="GO:0071791">
    <property type="term" value="F:chemokine (C-C motif) ligand 5 binding"/>
    <property type="evidence" value="ECO:0007669"/>
    <property type="project" value="TreeGrafter"/>
</dbReference>
<dbReference type="GO" id="GO:0019722">
    <property type="term" value="P:calcium-mediated signaling"/>
    <property type="evidence" value="ECO:0007669"/>
    <property type="project" value="TreeGrafter"/>
</dbReference>
<dbReference type="GO" id="GO:0060326">
    <property type="term" value="P:cell chemotaxis"/>
    <property type="evidence" value="ECO:0007669"/>
    <property type="project" value="TreeGrafter"/>
</dbReference>
<dbReference type="GO" id="GO:0006955">
    <property type="term" value="P:immune response"/>
    <property type="evidence" value="ECO:0007669"/>
    <property type="project" value="InterPro"/>
</dbReference>
<dbReference type="GO" id="GO:0006954">
    <property type="term" value="P:inflammatory response"/>
    <property type="evidence" value="ECO:0007669"/>
    <property type="project" value="InterPro"/>
</dbReference>
<dbReference type="GO" id="GO:0007204">
    <property type="term" value="P:positive regulation of cytosolic calcium ion concentration"/>
    <property type="evidence" value="ECO:0007669"/>
    <property type="project" value="TreeGrafter"/>
</dbReference>
<dbReference type="CDD" id="cd15184">
    <property type="entry name" value="7tmA_CCR5_CCR2"/>
    <property type="match status" value="1"/>
</dbReference>
<dbReference type="FunFam" id="1.20.1070.10:FF:000026">
    <property type="entry name" value="C-C chemokine receptor type 5"/>
    <property type="match status" value="1"/>
</dbReference>
<dbReference type="Gene3D" id="1.20.1070.10">
    <property type="entry name" value="Rhodopsin 7-helix transmembrane proteins"/>
    <property type="match status" value="1"/>
</dbReference>
<dbReference type="InterPro" id="IPR050119">
    <property type="entry name" value="CCR1-9-like"/>
</dbReference>
<dbReference type="InterPro" id="IPR002240">
    <property type="entry name" value="Chemokine_CCR5"/>
</dbReference>
<dbReference type="InterPro" id="IPR000355">
    <property type="entry name" value="Chemokine_rcpt"/>
</dbReference>
<dbReference type="InterPro" id="IPR000276">
    <property type="entry name" value="GPCR_Rhodpsn"/>
</dbReference>
<dbReference type="InterPro" id="IPR017452">
    <property type="entry name" value="GPCR_Rhodpsn_7TM"/>
</dbReference>
<dbReference type="PANTHER" id="PTHR10489:SF686">
    <property type="entry name" value="C-C CHEMOKINE RECEPTOR TYPE 5"/>
    <property type="match status" value="1"/>
</dbReference>
<dbReference type="PANTHER" id="PTHR10489">
    <property type="entry name" value="CELL ADHESION MOLECULE"/>
    <property type="match status" value="1"/>
</dbReference>
<dbReference type="Pfam" id="PF00001">
    <property type="entry name" value="7tm_1"/>
    <property type="match status" value="1"/>
</dbReference>
<dbReference type="PRINTS" id="PR00657">
    <property type="entry name" value="CCCHEMOKINER"/>
</dbReference>
<dbReference type="PRINTS" id="PR01110">
    <property type="entry name" value="CHEMOKINER5"/>
</dbReference>
<dbReference type="PRINTS" id="PR00237">
    <property type="entry name" value="GPCRRHODOPSN"/>
</dbReference>
<dbReference type="SUPFAM" id="SSF81321">
    <property type="entry name" value="Family A G protein-coupled receptor-like"/>
    <property type="match status" value="1"/>
</dbReference>
<dbReference type="PROSITE" id="PS00237">
    <property type="entry name" value="G_PROTEIN_RECEP_F1_1"/>
    <property type="match status" value="1"/>
</dbReference>
<dbReference type="PROSITE" id="PS50262">
    <property type="entry name" value="G_PROTEIN_RECEP_F1_2"/>
    <property type="match status" value="1"/>
</dbReference>
<name>CCR5_ERYPA</name>
<feature type="chain" id="PRO_0000069255" description="C-C chemokine receptor type 5">
    <location>
        <begin position="1"/>
        <end position="352"/>
    </location>
</feature>
<feature type="topological domain" description="Extracellular" evidence="3">
    <location>
        <begin position="1"/>
        <end position="30"/>
    </location>
</feature>
<feature type="transmembrane region" description="Helical; Name=1" evidence="3">
    <location>
        <begin position="31"/>
        <end position="58"/>
    </location>
</feature>
<feature type="topological domain" description="Cytoplasmic" evidence="3">
    <location>
        <begin position="59"/>
        <end position="68"/>
    </location>
</feature>
<feature type="transmembrane region" description="Helical; Name=2" evidence="3">
    <location>
        <begin position="69"/>
        <end position="89"/>
    </location>
</feature>
<feature type="topological domain" description="Extracellular" evidence="3">
    <location>
        <begin position="90"/>
        <end position="102"/>
    </location>
</feature>
<feature type="transmembrane region" description="Helical; Name=3" evidence="3">
    <location>
        <begin position="103"/>
        <end position="124"/>
    </location>
</feature>
<feature type="topological domain" description="Cytoplasmic" evidence="3">
    <location>
        <begin position="125"/>
        <end position="141"/>
    </location>
</feature>
<feature type="transmembrane region" description="Helical; Name=4" evidence="3">
    <location>
        <begin position="142"/>
        <end position="166"/>
    </location>
</feature>
<feature type="topological domain" description="Extracellular" evidence="3">
    <location>
        <begin position="167"/>
        <end position="198"/>
    </location>
</feature>
<feature type="transmembrane region" description="Helical; Name=5" evidence="3">
    <location>
        <begin position="199"/>
        <end position="218"/>
    </location>
</feature>
<feature type="topological domain" description="Cytoplasmic" evidence="3">
    <location>
        <begin position="219"/>
        <end position="235"/>
    </location>
</feature>
<feature type="transmembrane region" description="Helical; Name=6" evidence="3">
    <location>
        <begin position="236"/>
        <end position="260"/>
    </location>
</feature>
<feature type="topological domain" description="Extracellular" evidence="3">
    <location>
        <begin position="261"/>
        <end position="277"/>
    </location>
</feature>
<feature type="transmembrane region" description="Helical; Name=7" evidence="3">
    <location>
        <begin position="278"/>
        <end position="301"/>
    </location>
</feature>
<feature type="topological domain" description="Cytoplasmic" evidence="3">
    <location>
        <begin position="302"/>
        <end position="352"/>
    </location>
</feature>
<feature type="modified residue" description="Sulfotyrosine" evidence="1">
    <location>
        <position position="3"/>
    </location>
</feature>
<feature type="modified residue" description="Sulfotyrosine" evidence="3">
    <location>
        <position position="10"/>
    </location>
</feature>
<feature type="modified residue" description="Sulfotyrosine" evidence="3">
    <location>
        <position position="14"/>
    </location>
</feature>
<feature type="modified residue" description="Sulfotyrosine" evidence="3">
    <location>
        <position position="15"/>
    </location>
</feature>
<feature type="modified residue" description="Phosphoserine; by BARK1" evidence="1">
    <location>
        <position position="336"/>
    </location>
</feature>
<feature type="modified residue" description="Phosphoserine; by BARK1" evidence="1">
    <location>
        <position position="337"/>
    </location>
</feature>
<feature type="modified residue" description="Phosphoserine; by BARK1" evidence="1">
    <location>
        <position position="342"/>
    </location>
</feature>
<feature type="modified residue" description="Phosphoserine; by BARK1" evidence="1">
    <location>
        <position position="349"/>
    </location>
</feature>
<feature type="lipid moiety-binding region" description="S-palmitoyl cysteine" evidence="1">
    <location>
        <position position="321"/>
    </location>
</feature>
<feature type="lipid moiety-binding region" description="S-palmitoyl cysteine" evidence="1">
    <location>
        <position position="323"/>
    </location>
</feature>
<feature type="lipid moiety-binding region" description="S-palmitoyl cysteine" evidence="1">
    <location>
        <position position="324"/>
    </location>
</feature>
<feature type="glycosylation site" description="O-linked (GalNAc...) serine" evidence="1">
    <location>
        <position position="6"/>
    </location>
</feature>
<feature type="glycosylation site" description="O-linked (GalNAc...) serine" evidence="1">
    <location>
        <position position="7"/>
    </location>
</feature>
<feature type="disulfide bond" evidence="1">
    <location>
        <begin position="20"/>
        <end position="269"/>
    </location>
</feature>
<feature type="disulfide bond" evidence="4">
    <location>
        <begin position="101"/>
        <end position="178"/>
    </location>
</feature>
<evidence type="ECO:0000250" key="1">
    <source>
        <dbReference type="UniProtKB" id="P51681"/>
    </source>
</evidence>
<evidence type="ECO:0000250" key="2">
    <source>
        <dbReference type="UniProtKB" id="Q9XT76"/>
    </source>
</evidence>
<evidence type="ECO:0000255" key="3"/>
<evidence type="ECO:0000255" key="4">
    <source>
        <dbReference type="PROSITE-ProRule" id="PRU00521"/>
    </source>
</evidence>